<sequence length="524" mass="58043">MSDNGELEDKPPAPPVRMSSTIFSTGGKDPLSANHSLKPLPSVPEEKKPRHKIISIFSGTEKGSKKKEKERPEISPPSDFEHTIHVGFDAVTGEFTGMPEQWARLLQTSNITKLEQKKNPQAVLDVLKFYDSNTVKQKYLSFTPPEKDGFPSGTPALNAKGTEAPAVVTEEEDDDEETAPPVIAPRPDHTKSIYTRSVIDPVPAPVGDSHVDGAAKSLDKQKKKTKMTDEEIMEKLRTIVSIGDPKKKYTRYEKIGQGASGTVFTATDVALGQEVAIKQINLQKQPKKELIINEILVMKELKNPNIVNFLDSYLVGDELFVVMEYLAGGSLTDVVTETCMDEAQIAAVCRECLQALEFLHANQVIHRDIKSDNVLLGMEGSVKLTDFGFCAQITPEQSKRSTMVGTPYWMAPEVVTRKAYGPKVDIWSLGIMAIEMVEGEPPYLNENPLRALYLIATNGTPELQNPEKLSPIFRDFLNRCLEMDVEKRGSAKELLQHPFLKLAKPLSSLTPLIMAAKEAMKSNR</sequence>
<comment type="function">
    <text evidence="8 9 12 14 15 18 19 20 21 22 23 25 26">Serine/threonine protein kinase that plays a role in a variety of different signaling pathways including cytoskeleton regulation, cell motility, cell cycle progression, apoptosis or proliferation (PubMed:12853446, PubMed:16617111, PubMed:19273597, PubMed:19923322, PubMed:33693784, PubMed:7744004, PubMed:9171063). Acts as a downstream effector of the small GTPases CDC42 and RAC1 (PubMed:7744004). Activation by the binding of active CDC42 and RAC1 results in a conformational change and a subsequent autophosphorylation on several serine and/or threonine residues (PubMed:7744004). Full-length PAK2 stimulates cell survival and cell growth (PubMed:7744004). Phosphorylates MAPK4 and MAPK6 and activates the downstream target MAPKAPK5, a regulator of F-actin polymerization and cell migration (PubMed:21317288). Phosphorylates JUN and plays an important role in EGF-induced cell proliferation (PubMed:21177766). Phosphorylates many other substrates including histone H4 to promote assembly of H3.3 and H4 into nucleosomes, BAD, ribosomal protein S6, or MBP (PubMed:21724829). Phosphorylates CASP7, thereby preventing its activity (PubMed:21555521, PubMed:27889207). Additionally, associates with ARHGEF7 and GIT1 to perform kinase-independent functions such as spindle orientation control during mitosis (PubMed:19273597, PubMed:19923322). On the other hand, apoptotic stimuli such as DNA damage lead to caspase-mediated cleavage of PAK2, generating PAK-2p34, an active p34 fragment that translocates to the nucleus and promotes cellular apoptosis involving the JNK signaling pathway (PubMed:12853446, PubMed:16617111, PubMed:9171063). Caspase-activated PAK2 phosphorylates MKNK1 and reduces cellular translation (PubMed:15234964).</text>
</comment>
<comment type="catalytic activity">
    <reaction evidence="9 18 19 20 21 22 23">
        <text>L-seryl-[protein] + ATP = O-phospho-L-seryl-[protein] + ADP + H(+)</text>
        <dbReference type="Rhea" id="RHEA:17989"/>
        <dbReference type="Rhea" id="RHEA-COMP:9863"/>
        <dbReference type="Rhea" id="RHEA-COMP:11604"/>
        <dbReference type="ChEBI" id="CHEBI:15378"/>
        <dbReference type="ChEBI" id="CHEBI:29999"/>
        <dbReference type="ChEBI" id="CHEBI:30616"/>
        <dbReference type="ChEBI" id="CHEBI:83421"/>
        <dbReference type="ChEBI" id="CHEBI:456216"/>
        <dbReference type="EC" id="2.7.11.1"/>
    </reaction>
    <physiologicalReaction direction="left-to-right" evidence="9 18 19 21 22 23">
        <dbReference type="Rhea" id="RHEA:17990"/>
    </physiologicalReaction>
</comment>
<comment type="catalytic activity">
    <reaction evidence="9 18 19 20 21 22">
        <text>L-threonyl-[protein] + ATP = O-phospho-L-threonyl-[protein] + ADP + H(+)</text>
        <dbReference type="Rhea" id="RHEA:46608"/>
        <dbReference type="Rhea" id="RHEA-COMP:11060"/>
        <dbReference type="Rhea" id="RHEA-COMP:11605"/>
        <dbReference type="ChEBI" id="CHEBI:15378"/>
        <dbReference type="ChEBI" id="CHEBI:30013"/>
        <dbReference type="ChEBI" id="CHEBI:30616"/>
        <dbReference type="ChEBI" id="CHEBI:61977"/>
        <dbReference type="ChEBI" id="CHEBI:456216"/>
        <dbReference type="EC" id="2.7.11.1"/>
    </reaction>
    <physiologicalReaction direction="left-to-right" evidence="9 18 19 21 22">
        <dbReference type="Rhea" id="RHEA:46609"/>
    </physiologicalReaction>
</comment>
<comment type="activity regulation">
    <text evidence="1 27">Activated by binding small G proteins (By similarity). Binding of GTP-bound CDC42 or RAC1 to the autoregulatory region releases monomers from the autoinhibited dimer, enables phosphorylation of Thr-402 and allows the kinase domain to adopt an active structure (By similarity). Following caspase cleavage, autophosphorylated PAK-2p34 is constitutively active (PubMed:9786869).</text>
</comment>
<comment type="subunit">
    <text evidence="10 11 13 14 16">Interacts tightly with GTP-bound but not GDP-bound CDC42/p21 and RAC1 (PubMed:20696164). Interacts with SH3MD4 (PubMed:16374509). Interacts with SCRIB (PubMed:18716323). Interacts with ARHGEF7 and GIT1 (PubMed:19273597). PAK-2p34 interacts with ARHGAP10 (PubMed:15471851).</text>
</comment>
<comment type="subunit">
    <text evidence="7">(Microbial infection) Interacts with and activated by HIV-1 Nef.</text>
</comment>
<comment type="interaction">
    <interactant intactId="EBI-1045887">
        <id>Q13177</id>
    </interactant>
    <interactant intactId="EBI-11096309">
        <id>Q9NYB9-2</id>
        <label>ABI2</label>
    </interactant>
    <organismsDiffer>false</organismsDiffer>
    <experiments>3</experiments>
</comment>
<comment type="interaction">
    <interactant intactId="EBI-1045887">
        <id>Q13177</id>
    </interactant>
    <interactant intactId="EBI-1642523">
        <id>Q15052</id>
        <label>ARHGEF6</label>
    </interactant>
    <organismsDiffer>false</organismsDiffer>
    <experiments>8</experiments>
</comment>
<comment type="interaction">
    <interactant intactId="EBI-1045887">
        <id>Q13177</id>
    </interactant>
    <interactant intactId="EBI-717515">
        <id>Q14155</id>
        <label>ARHGEF7</label>
    </interactant>
    <organismsDiffer>false</organismsDiffer>
    <experiments>8</experiments>
</comment>
<comment type="interaction">
    <interactant intactId="EBI-1045887">
        <id>Q13177</id>
    </interactant>
    <interactant intactId="EBI-523958">
        <id>P55210</id>
        <label>CASP7</label>
    </interactant>
    <organismsDiffer>false</organismsDiffer>
    <experiments>6</experiments>
</comment>
<comment type="interaction">
    <interactant intactId="EBI-1045887">
        <id>Q13177</id>
    </interactant>
    <interactant intactId="EBI-81752">
        <id>P60953</id>
        <label>CDC42</label>
    </interactant>
    <organismsDiffer>false</organismsDiffer>
    <experiments>8</experiments>
</comment>
<comment type="interaction">
    <interactant intactId="EBI-1045887">
        <id>Q13177</id>
    </interactant>
    <interactant intactId="EBI-401755">
        <id>P62993</id>
        <label>GRB2</label>
    </interactant>
    <organismsDiffer>false</organismsDiffer>
    <experiments>2</experiments>
</comment>
<comment type="interaction">
    <interactant intactId="EBI-1045887">
        <id>Q13177</id>
    </interactant>
    <interactant intactId="EBI-346340">
        <id>P08631</id>
        <label>HCK</label>
    </interactant>
    <organismsDiffer>false</organismsDiffer>
    <experiments>2</experiments>
</comment>
<comment type="interaction">
    <interactant intactId="EBI-1045887">
        <id>Q13177</id>
    </interactant>
    <interactant intactId="EBI-466029">
        <id>P42858</id>
        <label>HTT</label>
    </interactant>
    <organismsDiffer>false</organismsDiffer>
    <experiments>2</experiments>
</comment>
<comment type="interaction">
    <interactant intactId="EBI-1045887">
        <id>Q13177</id>
    </interactant>
    <interactant intactId="EBI-444403">
        <id>P53667</id>
        <label>LIMK1</label>
    </interactant>
    <organismsDiffer>false</organismsDiffer>
    <experiments>2</experiments>
</comment>
<comment type="interaction">
    <interactant intactId="EBI-1045887">
        <id>Q13177</id>
    </interactant>
    <interactant intactId="EBI-389883">
        <id>P16333</id>
        <label>NCK1</label>
    </interactant>
    <organismsDiffer>false</organismsDiffer>
    <experiments>6</experiments>
</comment>
<comment type="interaction">
    <interactant intactId="EBI-1045887">
        <id>Q13177</id>
    </interactant>
    <interactant intactId="EBI-713635">
        <id>O43639</id>
        <label>NCK2</label>
    </interactant>
    <organismsDiffer>false</organismsDiffer>
    <experiments>11</experiments>
</comment>
<comment type="interaction">
    <interactant intactId="EBI-1045887">
        <id>Q13177</id>
    </interactant>
    <interactant intactId="EBI-1045887">
        <id>Q13177</id>
        <label>PAK2</label>
    </interactant>
    <organismsDiffer>false</organismsDiffer>
    <experiments>3</experiments>
</comment>
<comment type="interaction">
    <interactant intactId="EBI-1045887">
        <id>Q13177</id>
    </interactant>
    <interactant intactId="EBI-413628">
        <id>P63000</id>
        <label>RAC1</label>
    </interactant>
    <organismsDiffer>false</organismsDiffer>
    <experiments>5</experiments>
</comment>
<comment type="interaction">
    <interactant intactId="EBI-1045887">
        <id>Q13177</id>
    </interactant>
    <interactant intactId="EBI-365996">
        <id>P04049</id>
        <label>RAF1</label>
    </interactant>
    <organismsDiffer>false</organismsDiffer>
    <experiments>2</experiments>
</comment>
<comment type="interaction">
    <interactant intactId="EBI-1045887">
        <id>Q13177</id>
    </interactant>
    <interactant intactId="EBI-6285694">
        <id>Q9H4E5</id>
        <label>RHOJ</label>
    </interactant>
    <organismsDiffer>false</organismsDiffer>
    <experiments>7</experiments>
</comment>
<comment type="interaction">
    <interactant intactId="EBI-1045887">
        <id>Q13177</id>
    </interactant>
    <interactant intactId="EBI-7975674">
        <id>Q8TEJ3</id>
        <label>SH3RF3</label>
    </interactant>
    <organismsDiffer>false</organismsDiffer>
    <experiments>2</experiments>
</comment>
<comment type="interaction">
    <interactant intactId="EBI-1045887">
        <id>Q13177</id>
    </interactant>
    <interactant intactId="EBI-433642">
        <id>Q9BX66</id>
        <label>SORBS1</label>
    </interactant>
    <organismsDiffer>false</organismsDiffer>
    <experiments>2</experiments>
</comment>
<comment type="interaction">
    <interactant intactId="EBI-1045887">
        <id>Q13177</id>
    </interactant>
    <interactant intactId="EBI-311323">
        <id>O94875</id>
        <label>SORBS2</label>
    </interactant>
    <organismsDiffer>false</organismsDiffer>
    <experiments>2</experiments>
</comment>
<comment type="interaction">
    <interactant intactId="EBI-1045887">
        <id>Q13177</id>
    </interactant>
    <interactant intactId="EBI-741237">
        <id>O60504</id>
        <label>SORBS3</label>
    </interactant>
    <organismsDiffer>false</organismsDiffer>
    <experiments>6</experiments>
</comment>
<comment type="interaction">
    <interactant intactId="EBI-1045887">
        <id>Q13177</id>
    </interactant>
    <interactant intactId="EBI-621482">
        <id>P12931</id>
        <label>SRC</label>
    </interactant>
    <organismsDiffer>false</organismsDiffer>
    <experiments>2</experiments>
</comment>
<comment type="interaction">
    <interactant intactId="EBI-1045887">
        <id>Q13177</id>
    </interactant>
    <interactant intactId="EBI-3649585">
        <id>O55043</id>
        <label>Arhgef7</label>
    </interactant>
    <organismsDiffer>true</organismsDiffer>
    <experiments>8</experiments>
</comment>
<comment type="interaction">
    <interactant intactId="EBI-1045887">
        <id>Q13177</id>
    </interactant>
    <interactant intactId="EBI-15780451">
        <id>Q5PP90</id>
        <label>US3(L)</label>
    </interactant>
    <organismsDiffer>true</organismsDiffer>
    <experiments>2</experiments>
</comment>
<comment type="subcellular location">
    <molecule>Serine/threonine-protein kinase PAK 2</molecule>
    <subcellularLocation>
        <location evidence="15 20">Cytoplasm</location>
    </subcellularLocation>
    <subcellularLocation>
        <location evidence="8 20">Nucleus</location>
    </subcellularLocation>
    <text evidence="15">MYO18A mediates the cellular distribution of the PAK2-ARHGEF7-GIT1 complex to the inner surface of the cell membrane.</text>
</comment>
<comment type="subcellular location">
    <molecule>PAK-2p34</molecule>
    <subcellularLocation>
        <location evidence="8">Nucleus</location>
    </subcellularLocation>
    <subcellularLocation>
        <location evidence="10">Cytoplasm</location>
        <location evidence="10">Perinuclear region</location>
    </subcellularLocation>
    <subcellularLocation>
        <location evidence="12">Membrane</location>
        <topology evidence="12">Lipid-anchor</topology>
    </subcellularLocation>
    <text evidence="10 12">Interaction with ARHGAP10 probably changes PAK-2p34 location to cytoplasmic perinuclear region (PubMed:15471851). Myristoylation changes PAK-2p34 location to the membrane (PubMed:16617111).</text>
</comment>
<comment type="tissue specificity">
    <text evidence="25">Ubiquitously expressed. Higher levels seen in skeletal muscle, ovary, thymus and spleen.</text>
</comment>
<comment type="PTM">
    <text evidence="17 24 27">Full-length PAK2 is autophosphorylated when activated by CDC42/p21. Following cleavage, both peptides, PAK-2p27 and PAK-2p34, become highly autophosphorylated, with PAK-2p27 being phosphorylated on serine and PAK-2p34 on threonine residues, respectively. Autophosphorylation of PAK-2p27 can occur in the absence of any effectors and is dependent on phosphorylation of Thr-402, because PAK-2p27 is acting as an exogenous substrate.</text>
</comment>
<comment type="PTM">
    <text evidence="8 26 27">During apoptosis proteolytically cleaved by caspase-3 or caspase-3-like proteases to yield active PAK-2p34.</text>
</comment>
<comment type="PTM">
    <text evidence="8">Ubiquitinated, leading to its proteasomal degradation.</text>
</comment>
<comment type="PTM">
    <molecule>PAK-2p34</molecule>
    <text evidence="12">PAK-2p34 is myristoylated.</text>
</comment>
<comment type="disease" evidence="23">
    <disease id="DI-06463">
        <name>Knobloch syndrome 2</name>
        <acronym>KNO2</acronym>
        <description>An autosomal dominant form of Knobloch syndrome characterized by high myopia, vitreoretinal degeneration, retinal detachment, occipital encephalocele or scalp lesions, and mild to severe psychomotor delay.</description>
        <dbReference type="MIM" id="618458"/>
    </disease>
    <text>The disease is caused by variants affecting the gene represented in this entry.</text>
</comment>
<comment type="similarity">
    <text evidence="28">Belongs to the protein kinase superfamily. STE Ser/Thr protein kinase family. STE20 subfamily.</text>
</comment>
<comment type="online information" name="Atlas of Genetics and Cytogenetics in Oncology and Haematology">
    <link uri="https://atlasgeneticsoncology.org/gene/41634/PAK2"/>
</comment>
<evidence type="ECO:0000250" key="1">
    <source>
        <dbReference type="UniProtKB" id="Q13153"/>
    </source>
</evidence>
<evidence type="ECO:0000250" key="2">
    <source>
        <dbReference type="UniProtKB" id="Q8CIN4"/>
    </source>
</evidence>
<evidence type="ECO:0000255" key="3">
    <source>
        <dbReference type="PROSITE-ProRule" id="PRU00057"/>
    </source>
</evidence>
<evidence type="ECO:0000255" key="4">
    <source>
        <dbReference type="PROSITE-ProRule" id="PRU00159"/>
    </source>
</evidence>
<evidence type="ECO:0000255" key="5">
    <source>
        <dbReference type="PROSITE-ProRule" id="PRU10027"/>
    </source>
</evidence>
<evidence type="ECO:0000256" key="6">
    <source>
        <dbReference type="SAM" id="MobiDB-lite"/>
    </source>
</evidence>
<evidence type="ECO:0000269" key="7">
    <source>
    </source>
</evidence>
<evidence type="ECO:0000269" key="8">
    <source>
    </source>
</evidence>
<evidence type="ECO:0000269" key="9">
    <source>
    </source>
</evidence>
<evidence type="ECO:0000269" key="10">
    <source>
    </source>
</evidence>
<evidence type="ECO:0000269" key="11">
    <source>
    </source>
</evidence>
<evidence type="ECO:0000269" key="12">
    <source>
    </source>
</evidence>
<evidence type="ECO:0000269" key="13">
    <source>
    </source>
</evidence>
<evidence type="ECO:0000269" key="14">
    <source>
    </source>
</evidence>
<evidence type="ECO:0000269" key="15">
    <source>
    </source>
</evidence>
<evidence type="ECO:0000269" key="16">
    <source>
    </source>
</evidence>
<evidence type="ECO:0000269" key="17">
    <source>
    </source>
</evidence>
<evidence type="ECO:0000269" key="18">
    <source>
    </source>
</evidence>
<evidence type="ECO:0000269" key="19">
    <source>
    </source>
</evidence>
<evidence type="ECO:0000269" key="20">
    <source>
    </source>
</evidence>
<evidence type="ECO:0000269" key="21">
    <source>
    </source>
</evidence>
<evidence type="ECO:0000269" key="22">
    <source>
    </source>
</evidence>
<evidence type="ECO:0000269" key="23">
    <source>
    </source>
</evidence>
<evidence type="ECO:0000269" key="24">
    <source>
    </source>
</evidence>
<evidence type="ECO:0000269" key="25">
    <source>
    </source>
</evidence>
<evidence type="ECO:0000269" key="26">
    <source>
    </source>
</evidence>
<evidence type="ECO:0000269" key="27">
    <source>
    </source>
</evidence>
<evidence type="ECO:0000305" key="28"/>
<evidence type="ECO:0000305" key="29">
    <source>
    </source>
</evidence>
<evidence type="ECO:0007744" key="30">
    <source>
    </source>
</evidence>
<evidence type="ECO:0007744" key="31">
    <source>
    </source>
</evidence>
<evidence type="ECO:0007744" key="32">
    <source>
    </source>
</evidence>
<evidence type="ECO:0007744" key="33">
    <source>
    </source>
</evidence>
<evidence type="ECO:0007744" key="34">
    <source>
    </source>
</evidence>
<evidence type="ECO:0007744" key="35">
    <source>
    </source>
</evidence>
<evidence type="ECO:0007744" key="36">
    <source>
    </source>
</evidence>
<evidence type="ECO:0007744" key="37">
    <source>
    </source>
</evidence>
<evidence type="ECO:0007744" key="38">
    <source>
    </source>
</evidence>
<evidence type="ECO:0007744" key="39">
    <source>
    </source>
</evidence>
<evidence type="ECO:0007829" key="40">
    <source>
        <dbReference type="PDB" id="3PCS"/>
    </source>
</evidence>
<name>PAK2_HUMAN</name>
<organism>
    <name type="scientific">Homo sapiens</name>
    <name type="common">Human</name>
    <dbReference type="NCBI Taxonomy" id="9606"/>
    <lineage>
        <taxon>Eukaryota</taxon>
        <taxon>Metazoa</taxon>
        <taxon>Chordata</taxon>
        <taxon>Craniata</taxon>
        <taxon>Vertebrata</taxon>
        <taxon>Euteleostomi</taxon>
        <taxon>Mammalia</taxon>
        <taxon>Eutheria</taxon>
        <taxon>Euarchontoglires</taxon>
        <taxon>Primates</taxon>
        <taxon>Haplorrhini</taxon>
        <taxon>Catarrhini</taxon>
        <taxon>Hominidae</taxon>
        <taxon>Homo</taxon>
    </lineage>
</organism>
<protein>
    <recommendedName>
        <fullName>Serine/threonine-protein kinase PAK 2</fullName>
        <ecNumber evidence="9 18 19 20 21">2.7.11.1</ecNumber>
    </recommendedName>
    <alternativeName>
        <fullName>Gamma-PAK</fullName>
    </alternativeName>
    <alternativeName>
        <fullName>PAK65</fullName>
    </alternativeName>
    <alternativeName>
        <fullName>S6/H4 kinase</fullName>
    </alternativeName>
    <alternativeName>
        <fullName>p21-activated kinase 2</fullName>
        <shortName>PAK-2</shortName>
    </alternativeName>
    <alternativeName>
        <fullName>p58</fullName>
    </alternativeName>
    <component>
        <recommendedName>
            <fullName>PAK-2p27</fullName>
            <shortName>p27</shortName>
        </recommendedName>
    </component>
    <component>
        <recommendedName>
            <fullName>PAK-2p34</fullName>
            <shortName>p34</shortName>
        </recommendedName>
        <alternativeName>
            <fullName>C-t-PAK2</fullName>
        </alternativeName>
    </component>
</protein>
<proteinExistence type="evidence at protein level"/>
<dbReference type="EC" id="2.7.11.1" evidence="9 18 19 20 21"/>
<dbReference type="EMBL" id="U24153">
    <property type="protein sequence ID" value="AAA65442.1"/>
    <property type="molecule type" value="mRNA"/>
</dbReference>
<dbReference type="EMBL" id="BC069613">
    <property type="protein sequence ID" value="AAH69613.1"/>
    <property type="molecule type" value="mRNA"/>
</dbReference>
<dbReference type="EMBL" id="U25975">
    <property type="protein sequence ID" value="AAA75468.1"/>
    <property type="molecule type" value="mRNA"/>
</dbReference>
<dbReference type="CCDS" id="CCDS3321.1"/>
<dbReference type="PIR" id="S58682">
    <property type="entry name" value="S58682"/>
</dbReference>
<dbReference type="RefSeq" id="NP_002568.2">
    <property type="nucleotide sequence ID" value="NM_002577.4"/>
</dbReference>
<dbReference type="RefSeq" id="XP_011511172.1">
    <property type="nucleotide sequence ID" value="XM_011512870.3"/>
</dbReference>
<dbReference type="RefSeq" id="XP_016861990.1">
    <property type="nucleotide sequence ID" value="XM_017006501.1"/>
</dbReference>
<dbReference type="RefSeq" id="XP_047304174.1">
    <property type="nucleotide sequence ID" value="XM_047448218.1"/>
</dbReference>
<dbReference type="RefSeq" id="XP_047304175.1">
    <property type="nucleotide sequence ID" value="XM_047448219.1"/>
</dbReference>
<dbReference type="RefSeq" id="XP_054202644.1">
    <property type="nucleotide sequence ID" value="XM_054346669.1"/>
</dbReference>
<dbReference type="RefSeq" id="XP_054202645.1">
    <property type="nucleotide sequence ID" value="XM_054346670.1"/>
</dbReference>
<dbReference type="RefSeq" id="XP_054202646.1">
    <property type="nucleotide sequence ID" value="XM_054346671.1"/>
</dbReference>
<dbReference type="PDB" id="3PCS">
    <property type="method" value="X-ray"/>
    <property type="resolution" value="2.86 A"/>
    <property type="chains" value="E/F/G/H=121-136"/>
</dbReference>
<dbReference type="PDBsum" id="3PCS"/>
<dbReference type="SMR" id="Q13177"/>
<dbReference type="BioGRID" id="111098">
    <property type="interactions" value="214"/>
</dbReference>
<dbReference type="CORUM" id="Q13177"/>
<dbReference type="DIP" id="DIP-38249N"/>
<dbReference type="ELM" id="Q13177"/>
<dbReference type="FunCoup" id="Q13177">
    <property type="interactions" value="4381"/>
</dbReference>
<dbReference type="IntAct" id="Q13177">
    <property type="interactions" value="104"/>
</dbReference>
<dbReference type="MINT" id="Q13177"/>
<dbReference type="STRING" id="9606.ENSP00000314067"/>
<dbReference type="BindingDB" id="Q13177"/>
<dbReference type="ChEMBL" id="CHEMBL4487"/>
<dbReference type="DrugBank" id="DB12010">
    <property type="generic name" value="Fostamatinib"/>
</dbReference>
<dbReference type="DrugCentral" id="Q13177"/>
<dbReference type="GuidetoPHARMACOLOGY" id="2134"/>
<dbReference type="GlyCosmos" id="Q13177">
    <property type="glycosylation" value="2 sites, 1 glycan"/>
</dbReference>
<dbReference type="GlyGen" id="Q13177">
    <property type="glycosylation" value="3 sites, 1 N-linked glycan (1 site), 1 O-linked glycan (2 sites)"/>
</dbReference>
<dbReference type="iPTMnet" id="Q13177"/>
<dbReference type="MetOSite" id="Q13177"/>
<dbReference type="PhosphoSitePlus" id="Q13177"/>
<dbReference type="SwissPalm" id="Q13177"/>
<dbReference type="BioMuta" id="PAK2"/>
<dbReference type="DMDM" id="143811432"/>
<dbReference type="OGP" id="Q13177"/>
<dbReference type="CPTAC" id="CPTAC-1628"/>
<dbReference type="CPTAC" id="CPTAC-1726"/>
<dbReference type="jPOST" id="Q13177"/>
<dbReference type="MassIVE" id="Q13177"/>
<dbReference type="PaxDb" id="9606-ENSP00000314067"/>
<dbReference type="PeptideAtlas" id="Q13177"/>
<dbReference type="ProteomicsDB" id="59208"/>
<dbReference type="Pumba" id="Q13177"/>
<dbReference type="Antibodypedia" id="3583">
    <property type="antibodies" value="873 antibodies from 43 providers"/>
</dbReference>
<dbReference type="DNASU" id="5062"/>
<dbReference type="Ensembl" id="ENST00000327134.7">
    <property type="protein sequence ID" value="ENSP00000314067.3"/>
    <property type="gene ID" value="ENSG00000180370.10"/>
</dbReference>
<dbReference type="GeneID" id="5062"/>
<dbReference type="KEGG" id="hsa:5062"/>
<dbReference type="MANE-Select" id="ENST00000327134.7">
    <property type="protein sequence ID" value="ENSP00000314067.3"/>
    <property type="RefSeq nucleotide sequence ID" value="NM_002577.4"/>
    <property type="RefSeq protein sequence ID" value="NP_002568.2"/>
</dbReference>
<dbReference type="UCSC" id="uc003fwy.4">
    <property type="organism name" value="human"/>
</dbReference>
<dbReference type="AGR" id="HGNC:8591"/>
<dbReference type="CTD" id="5062"/>
<dbReference type="DisGeNET" id="5062"/>
<dbReference type="GeneCards" id="PAK2"/>
<dbReference type="HGNC" id="HGNC:8591">
    <property type="gene designation" value="PAK2"/>
</dbReference>
<dbReference type="HPA" id="ENSG00000180370">
    <property type="expression patterns" value="Low tissue specificity"/>
</dbReference>
<dbReference type="MalaCards" id="PAK2"/>
<dbReference type="MIM" id="605022">
    <property type="type" value="gene"/>
</dbReference>
<dbReference type="MIM" id="618458">
    <property type="type" value="phenotype"/>
</dbReference>
<dbReference type="neXtProt" id="NX_Q13177"/>
<dbReference type="OpenTargets" id="ENSG00000180370"/>
<dbReference type="Orphanet" id="1571">
    <property type="disease" value="Knobloch syndrome"/>
</dbReference>
<dbReference type="PharmGKB" id="PA32918"/>
<dbReference type="VEuPathDB" id="HostDB:ENSG00000180370"/>
<dbReference type="eggNOG" id="KOG0578">
    <property type="taxonomic scope" value="Eukaryota"/>
</dbReference>
<dbReference type="GeneTree" id="ENSGT00950000182988"/>
<dbReference type="HOGENOM" id="CLU_000288_26_6_1"/>
<dbReference type="InParanoid" id="Q13177"/>
<dbReference type="OMA" id="DYCNANC"/>
<dbReference type="OrthoDB" id="2914378at2759"/>
<dbReference type="PAN-GO" id="Q13177">
    <property type="GO annotations" value="6 GO annotations based on evolutionary models"/>
</dbReference>
<dbReference type="PhylomeDB" id="Q13177"/>
<dbReference type="TreeFam" id="TF105351"/>
<dbReference type="BRENDA" id="2.7.11.1">
    <property type="organism ID" value="2681"/>
</dbReference>
<dbReference type="PathwayCommons" id="Q13177"/>
<dbReference type="Reactome" id="R-HSA-164944">
    <property type="pathway name" value="Nef and signal transduction"/>
</dbReference>
<dbReference type="Reactome" id="R-HSA-202433">
    <property type="pathway name" value="Generation of second messenger molecules"/>
</dbReference>
<dbReference type="Reactome" id="R-HSA-211728">
    <property type="pathway name" value="Regulation of PAK-2p34 activity by PS-GAP/RHG10"/>
</dbReference>
<dbReference type="Reactome" id="R-HSA-211733">
    <property type="pathway name" value="Regulation of activated PAK-2p34 by proteasome mediated degradation"/>
</dbReference>
<dbReference type="Reactome" id="R-HSA-211736">
    <property type="pathway name" value="Stimulation of the cell death response by PAK-2p34"/>
</dbReference>
<dbReference type="Reactome" id="R-HSA-2871796">
    <property type="pathway name" value="FCERI mediated MAPK activation"/>
</dbReference>
<dbReference type="Reactome" id="R-HSA-389359">
    <property type="pathway name" value="CD28 dependent Vav1 pathway"/>
</dbReference>
<dbReference type="Reactome" id="R-HSA-3928664">
    <property type="pathway name" value="Ephrin signaling"/>
</dbReference>
<dbReference type="Reactome" id="R-HSA-399954">
    <property type="pathway name" value="Sema3A PAK dependent Axon repulsion"/>
</dbReference>
<dbReference type="Reactome" id="R-HSA-428540">
    <property type="pathway name" value="Activation of RAC1"/>
</dbReference>
<dbReference type="Reactome" id="R-HSA-4420097">
    <property type="pathway name" value="VEGFA-VEGFR2 Pathway"/>
</dbReference>
<dbReference type="Reactome" id="R-HSA-445355">
    <property type="pathway name" value="Smooth Muscle Contraction"/>
</dbReference>
<dbReference type="Reactome" id="R-HSA-5218920">
    <property type="pathway name" value="VEGFR2 mediated vascular permeability"/>
</dbReference>
<dbReference type="Reactome" id="R-HSA-5621575">
    <property type="pathway name" value="CD209 (DC-SIGN) signaling"/>
</dbReference>
<dbReference type="Reactome" id="R-HSA-5627123">
    <property type="pathway name" value="RHO GTPases activate PAKs"/>
</dbReference>
<dbReference type="Reactome" id="R-HSA-5687128">
    <property type="pathway name" value="MAPK6/MAPK4 signaling"/>
</dbReference>
<dbReference type="Reactome" id="R-HSA-8950505">
    <property type="pathway name" value="Gene and protein expression by JAK-STAT signaling after Interleukin-12 stimulation"/>
</dbReference>
<dbReference type="Reactome" id="R-HSA-9013148">
    <property type="pathway name" value="CDC42 GTPase cycle"/>
</dbReference>
<dbReference type="Reactome" id="R-HSA-9013149">
    <property type="pathway name" value="RAC1 GTPase cycle"/>
</dbReference>
<dbReference type="Reactome" id="R-HSA-9013404">
    <property type="pathway name" value="RAC2 GTPase cycle"/>
</dbReference>
<dbReference type="Reactome" id="R-HSA-9013406">
    <property type="pathway name" value="RHOQ GTPase cycle"/>
</dbReference>
<dbReference type="Reactome" id="R-HSA-9013407">
    <property type="pathway name" value="RHOH GTPase cycle"/>
</dbReference>
<dbReference type="Reactome" id="R-HSA-9013408">
    <property type="pathway name" value="RHOG GTPase cycle"/>
</dbReference>
<dbReference type="Reactome" id="R-HSA-9013409">
    <property type="pathway name" value="RHOJ GTPase cycle"/>
</dbReference>
<dbReference type="Reactome" id="R-HSA-9013420">
    <property type="pathway name" value="RHOU GTPase cycle"/>
</dbReference>
<dbReference type="Reactome" id="R-HSA-9013423">
    <property type="pathway name" value="RAC3 GTPase cycle"/>
</dbReference>
<dbReference type="Reactome" id="R-HSA-9013424">
    <property type="pathway name" value="RHOV GTPase cycle"/>
</dbReference>
<dbReference type="SignaLink" id="Q13177"/>
<dbReference type="SIGNOR" id="Q13177"/>
<dbReference type="BioGRID-ORCS" id="5062">
    <property type="hits" value="107 hits in 1197 CRISPR screens"/>
</dbReference>
<dbReference type="CD-CODE" id="8C2F96ED">
    <property type="entry name" value="Centrosome"/>
</dbReference>
<dbReference type="ChiTaRS" id="PAK2">
    <property type="organism name" value="human"/>
</dbReference>
<dbReference type="EvolutionaryTrace" id="Q13177"/>
<dbReference type="GeneWiki" id="PAK2"/>
<dbReference type="GenomeRNAi" id="5062"/>
<dbReference type="Pharos" id="Q13177">
    <property type="development level" value="Tchem"/>
</dbReference>
<dbReference type="PRO" id="PR:Q13177"/>
<dbReference type="Proteomes" id="UP000005640">
    <property type="component" value="Chromosome 3"/>
</dbReference>
<dbReference type="RNAct" id="Q13177">
    <property type="molecule type" value="protein"/>
</dbReference>
<dbReference type="Bgee" id="ENSG00000180370">
    <property type="expression patterns" value="Expressed in ganglionic eminence and 210 other cell types or tissues"/>
</dbReference>
<dbReference type="ExpressionAtlas" id="Q13177">
    <property type="expression patterns" value="baseline and differential"/>
</dbReference>
<dbReference type="GO" id="GO:0005911">
    <property type="term" value="C:cell-cell junction"/>
    <property type="evidence" value="ECO:0000315"/>
    <property type="project" value="ARUK-UCL"/>
</dbReference>
<dbReference type="GO" id="GO:0005737">
    <property type="term" value="C:cytoplasm"/>
    <property type="evidence" value="ECO:0000314"/>
    <property type="project" value="UniProtKB"/>
</dbReference>
<dbReference type="GO" id="GO:0005829">
    <property type="term" value="C:cytosol"/>
    <property type="evidence" value="ECO:0000314"/>
    <property type="project" value="CAFA"/>
</dbReference>
<dbReference type="GO" id="GO:0005925">
    <property type="term" value="C:focal adhesion"/>
    <property type="evidence" value="ECO:0000314"/>
    <property type="project" value="HPA"/>
</dbReference>
<dbReference type="GO" id="GO:0098978">
    <property type="term" value="C:glutamatergic synapse"/>
    <property type="evidence" value="ECO:0007669"/>
    <property type="project" value="Ensembl"/>
</dbReference>
<dbReference type="GO" id="GO:0016607">
    <property type="term" value="C:nuclear speck"/>
    <property type="evidence" value="ECO:0000314"/>
    <property type="project" value="HPA"/>
</dbReference>
<dbReference type="GO" id="GO:0005654">
    <property type="term" value="C:nucleoplasm"/>
    <property type="evidence" value="ECO:0000314"/>
    <property type="project" value="HPA"/>
</dbReference>
<dbReference type="GO" id="GO:0005634">
    <property type="term" value="C:nucleus"/>
    <property type="evidence" value="ECO:0000314"/>
    <property type="project" value="UniProtKB"/>
</dbReference>
<dbReference type="GO" id="GO:0048471">
    <property type="term" value="C:perinuclear region of cytoplasm"/>
    <property type="evidence" value="ECO:0007669"/>
    <property type="project" value="UniProtKB-SubCell"/>
</dbReference>
<dbReference type="GO" id="GO:0005886">
    <property type="term" value="C:plasma membrane"/>
    <property type="evidence" value="ECO:0000304"/>
    <property type="project" value="Reactome"/>
</dbReference>
<dbReference type="GO" id="GO:0014069">
    <property type="term" value="C:postsynaptic density"/>
    <property type="evidence" value="ECO:0007669"/>
    <property type="project" value="Ensembl"/>
</dbReference>
<dbReference type="GO" id="GO:0030141">
    <property type="term" value="C:secretory granule"/>
    <property type="evidence" value="ECO:0007669"/>
    <property type="project" value="Ensembl"/>
</dbReference>
<dbReference type="GO" id="GO:0005524">
    <property type="term" value="F:ATP binding"/>
    <property type="evidence" value="ECO:0007669"/>
    <property type="project" value="UniProtKB-KW"/>
</dbReference>
<dbReference type="GO" id="GO:0045296">
    <property type="term" value="F:cadherin binding"/>
    <property type="evidence" value="ECO:0007005"/>
    <property type="project" value="BHF-UCL"/>
</dbReference>
<dbReference type="GO" id="GO:0042802">
    <property type="term" value="F:identical protein binding"/>
    <property type="evidence" value="ECO:0000353"/>
    <property type="project" value="IntAct"/>
</dbReference>
<dbReference type="GO" id="GO:0004672">
    <property type="term" value="F:protein kinase activity"/>
    <property type="evidence" value="ECO:0000304"/>
    <property type="project" value="ProtInc"/>
</dbReference>
<dbReference type="GO" id="GO:0019901">
    <property type="term" value="F:protein kinase binding"/>
    <property type="evidence" value="ECO:0000353"/>
    <property type="project" value="BHF-UCL"/>
</dbReference>
<dbReference type="GO" id="GO:0106310">
    <property type="term" value="F:protein serine kinase activity"/>
    <property type="evidence" value="ECO:0007669"/>
    <property type="project" value="RHEA"/>
</dbReference>
<dbReference type="GO" id="GO:0004674">
    <property type="term" value="F:protein serine/threonine kinase activity"/>
    <property type="evidence" value="ECO:0000314"/>
    <property type="project" value="UniProtKB"/>
</dbReference>
<dbReference type="GO" id="GO:0030296">
    <property type="term" value="F:protein tyrosine kinase activator activity"/>
    <property type="evidence" value="ECO:0000314"/>
    <property type="project" value="BHF-UCL"/>
</dbReference>
<dbReference type="GO" id="GO:0031267">
    <property type="term" value="F:small GTPase binding"/>
    <property type="evidence" value="ECO:0000353"/>
    <property type="project" value="CAFA"/>
</dbReference>
<dbReference type="GO" id="GO:0034333">
    <property type="term" value="P:adherens junction assembly"/>
    <property type="evidence" value="ECO:0000315"/>
    <property type="project" value="ARUK-UCL"/>
</dbReference>
<dbReference type="GO" id="GO:0006915">
    <property type="term" value="P:apoptotic process"/>
    <property type="evidence" value="ECO:0007669"/>
    <property type="project" value="UniProtKB-KW"/>
</dbReference>
<dbReference type="GO" id="GO:0070830">
    <property type="term" value="P:bicellular tight junction assembly"/>
    <property type="evidence" value="ECO:0000315"/>
    <property type="project" value="ARUK-UCL"/>
</dbReference>
<dbReference type="GO" id="GO:0003300">
    <property type="term" value="P:cardiac muscle hypertrophy"/>
    <property type="evidence" value="ECO:0007669"/>
    <property type="project" value="Ensembl"/>
</dbReference>
<dbReference type="GO" id="GO:0016477">
    <property type="term" value="P:cell migration"/>
    <property type="evidence" value="ECO:0000318"/>
    <property type="project" value="GO_Central"/>
</dbReference>
<dbReference type="GO" id="GO:0009267">
    <property type="term" value="P:cellular response to starvation"/>
    <property type="evidence" value="ECO:0000318"/>
    <property type="project" value="GO_Central"/>
</dbReference>
<dbReference type="GO" id="GO:0071560">
    <property type="term" value="P:cellular response to transforming growth factor beta stimulus"/>
    <property type="evidence" value="ECO:0007669"/>
    <property type="project" value="Ensembl"/>
</dbReference>
<dbReference type="GO" id="GO:0060996">
    <property type="term" value="P:dendritic spine development"/>
    <property type="evidence" value="ECO:0007669"/>
    <property type="project" value="Ensembl"/>
</dbReference>
<dbReference type="GO" id="GO:0035556">
    <property type="term" value="P:intracellular signal transduction"/>
    <property type="evidence" value="ECO:0000314"/>
    <property type="project" value="BHF-UCL"/>
</dbReference>
<dbReference type="GO" id="GO:0043066">
    <property type="term" value="P:negative regulation of apoptotic process"/>
    <property type="evidence" value="ECO:0000314"/>
    <property type="project" value="UniProt"/>
</dbReference>
<dbReference type="GO" id="GO:0006469">
    <property type="term" value="P:negative regulation of protein kinase activity"/>
    <property type="evidence" value="ECO:0000304"/>
    <property type="project" value="ProtInc"/>
</dbReference>
<dbReference type="GO" id="GO:0051497">
    <property type="term" value="P:negative regulation of stress fiber assembly"/>
    <property type="evidence" value="ECO:0000315"/>
    <property type="project" value="ARUK-UCL"/>
</dbReference>
<dbReference type="GO" id="GO:2001238">
    <property type="term" value="P:positive regulation of extrinsic apoptotic signaling pathway"/>
    <property type="evidence" value="ECO:0000315"/>
    <property type="project" value="UniProtKB"/>
</dbReference>
<dbReference type="GO" id="GO:0046777">
    <property type="term" value="P:protein autophosphorylation"/>
    <property type="evidence" value="ECO:0000314"/>
    <property type="project" value="MGI"/>
</dbReference>
<dbReference type="GO" id="GO:0150105">
    <property type="term" value="P:protein localization to cell-cell junction"/>
    <property type="evidence" value="ECO:0000315"/>
    <property type="project" value="ARUK-UCL"/>
</dbReference>
<dbReference type="GO" id="GO:0006468">
    <property type="term" value="P:protein phosphorylation"/>
    <property type="evidence" value="ECO:0000314"/>
    <property type="project" value="MGI"/>
</dbReference>
<dbReference type="GO" id="GO:0050770">
    <property type="term" value="P:regulation of axonogenesis"/>
    <property type="evidence" value="ECO:0000318"/>
    <property type="project" value="GO_Central"/>
</dbReference>
<dbReference type="GO" id="GO:0051493">
    <property type="term" value="P:regulation of cytoskeleton organization"/>
    <property type="evidence" value="ECO:0000315"/>
    <property type="project" value="ARUK-UCL"/>
</dbReference>
<dbReference type="GO" id="GO:0043408">
    <property type="term" value="P:regulation of MAPK cascade"/>
    <property type="evidence" value="ECO:0000318"/>
    <property type="project" value="GO_Central"/>
</dbReference>
<dbReference type="GO" id="GO:0007165">
    <property type="term" value="P:signal transduction"/>
    <property type="evidence" value="ECO:0000304"/>
    <property type="project" value="ProtInc"/>
</dbReference>
<dbReference type="GO" id="GO:0002223">
    <property type="term" value="P:stimulatory C-type lectin receptor signaling pathway"/>
    <property type="evidence" value="ECO:0000304"/>
    <property type="project" value="Reactome"/>
</dbReference>
<dbReference type="GO" id="GO:0048010">
    <property type="term" value="P:vascular endothelial growth factor receptor signaling pathway"/>
    <property type="evidence" value="ECO:0000304"/>
    <property type="project" value="Reactome"/>
</dbReference>
<dbReference type="CDD" id="cd01093">
    <property type="entry name" value="CRIB_PAK_like"/>
    <property type="match status" value="1"/>
</dbReference>
<dbReference type="CDD" id="cd06655">
    <property type="entry name" value="STKc_PAK2"/>
    <property type="match status" value="1"/>
</dbReference>
<dbReference type="FunFam" id="1.10.510.10:FF:000011">
    <property type="entry name" value="Non-specific serine/threonine protein kinase"/>
    <property type="match status" value="1"/>
</dbReference>
<dbReference type="FunFam" id="3.30.200.20:FF:000069">
    <property type="entry name" value="Non-specific serine/threonine protein kinase"/>
    <property type="match status" value="1"/>
</dbReference>
<dbReference type="FunFam" id="3.90.810.10:FF:000001">
    <property type="entry name" value="Non-specific serine/threonine protein kinase"/>
    <property type="match status" value="1"/>
</dbReference>
<dbReference type="Gene3D" id="3.90.810.10">
    <property type="entry name" value="CRIB domain"/>
    <property type="match status" value="1"/>
</dbReference>
<dbReference type="Gene3D" id="3.30.200.20">
    <property type="entry name" value="Phosphorylase Kinase, domain 1"/>
    <property type="match status" value="1"/>
</dbReference>
<dbReference type="Gene3D" id="1.10.510.10">
    <property type="entry name" value="Transferase(Phosphotransferase) domain 1"/>
    <property type="match status" value="1"/>
</dbReference>
<dbReference type="IDEAL" id="IID00244"/>
<dbReference type="InterPro" id="IPR000095">
    <property type="entry name" value="CRIB_dom"/>
</dbReference>
<dbReference type="InterPro" id="IPR036936">
    <property type="entry name" value="CRIB_dom_sf"/>
</dbReference>
<dbReference type="InterPro" id="IPR011009">
    <property type="entry name" value="Kinase-like_dom_sf"/>
</dbReference>
<dbReference type="InterPro" id="IPR051931">
    <property type="entry name" value="PAK3-like"/>
</dbReference>
<dbReference type="InterPro" id="IPR033923">
    <property type="entry name" value="PAK_BD"/>
</dbReference>
<dbReference type="InterPro" id="IPR000719">
    <property type="entry name" value="Prot_kinase_dom"/>
</dbReference>
<dbReference type="InterPro" id="IPR017441">
    <property type="entry name" value="Protein_kinase_ATP_BS"/>
</dbReference>
<dbReference type="InterPro" id="IPR008271">
    <property type="entry name" value="Ser/Thr_kinase_AS"/>
</dbReference>
<dbReference type="InterPro" id="IPR035064">
    <property type="entry name" value="STK_PAK2"/>
</dbReference>
<dbReference type="PANTHER" id="PTHR45832:SF21">
    <property type="entry name" value="NON-SPECIFIC SERINE_THREONINE PROTEIN KINASE"/>
    <property type="match status" value="1"/>
</dbReference>
<dbReference type="PANTHER" id="PTHR45832">
    <property type="entry name" value="SERINE/THREONINE-PROTEIN KINASE SAMKA-RELATED-RELATED"/>
    <property type="match status" value="1"/>
</dbReference>
<dbReference type="Pfam" id="PF00786">
    <property type="entry name" value="PBD"/>
    <property type="match status" value="1"/>
</dbReference>
<dbReference type="Pfam" id="PF00069">
    <property type="entry name" value="Pkinase"/>
    <property type="match status" value="1"/>
</dbReference>
<dbReference type="SMART" id="SM00285">
    <property type="entry name" value="PBD"/>
    <property type="match status" value="1"/>
</dbReference>
<dbReference type="SMART" id="SM00220">
    <property type="entry name" value="S_TKc"/>
    <property type="match status" value="1"/>
</dbReference>
<dbReference type="SUPFAM" id="SSF56112">
    <property type="entry name" value="Protein kinase-like (PK-like)"/>
    <property type="match status" value="1"/>
</dbReference>
<dbReference type="PROSITE" id="PS50108">
    <property type="entry name" value="CRIB"/>
    <property type="match status" value="1"/>
</dbReference>
<dbReference type="PROSITE" id="PS00107">
    <property type="entry name" value="PROTEIN_KINASE_ATP"/>
    <property type="match status" value="1"/>
</dbReference>
<dbReference type="PROSITE" id="PS50011">
    <property type="entry name" value="PROTEIN_KINASE_DOM"/>
    <property type="match status" value="1"/>
</dbReference>
<dbReference type="PROSITE" id="PS00108">
    <property type="entry name" value="PROTEIN_KINASE_ST"/>
    <property type="match status" value="1"/>
</dbReference>
<feature type="initiator methionine" description="Removed" evidence="34 35 36 37">
    <location>
        <position position="1"/>
    </location>
</feature>
<feature type="chain" id="PRO_0000086465" description="Serine/threonine-protein kinase PAK 2">
    <location>
        <begin position="2"/>
        <end position="524"/>
    </location>
</feature>
<feature type="chain" id="PRO_0000304922" description="PAK-2p27">
    <location>
        <begin position="2"/>
        <end position="212"/>
    </location>
</feature>
<feature type="chain" id="PRO_0000304923" description="PAK-2p34">
    <location>
        <begin position="213"/>
        <end position="524"/>
    </location>
</feature>
<feature type="domain" description="CRIB" evidence="3">
    <location>
        <begin position="74"/>
        <end position="87"/>
    </location>
</feature>
<feature type="domain" description="Protein kinase" evidence="4">
    <location>
        <begin position="249"/>
        <end position="499"/>
    </location>
</feature>
<feature type="region of interest" description="Disordered" evidence="6">
    <location>
        <begin position="1"/>
        <end position="81"/>
    </location>
</feature>
<feature type="region of interest" description="Autoregulatory region" evidence="1">
    <location>
        <begin position="69"/>
        <end position="137"/>
    </location>
</feature>
<feature type="region of interest" description="GTPase-binding" evidence="1">
    <location>
        <begin position="69"/>
        <end position="112"/>
    </location>
</feature>
<feature type="region of interest" description="Disordered" evidence="6">
    <location>
        <begin position="143"/>
        <end position="164"/>
    </location>
</feature>
<feature type="region of interest" description="Disordered" evidence="6">
    <location>
        <begin position="169"/>
        <end position="188"/>
    </location>
</feature>
<feature type="short sequence motif" description="Nuclear localization signal" evidence="8">
    <location>
        <begin position="245"/>
        <end position="251"/>
    </location>
</feature>
<feature type="compositionally biased region" description="Basic and acidic residues" evidence="6">
    <location>
        <begin position="67"/>
        <end position="81"/>
    </location>
</feature>
<feature type="compositionally biased region" description="Acidic residues" evidence="6">
    <location>
        <begin position="169"/>
        <end position="178"/>
    </location>
</feature>
<feature type="active site" description="Proton acceptor" evidence="4 5">
    <location>
        <position position="367"/>
    </location>
</feature>
<feature type="binding site" evidence="4">
    <location>
        <begin position="255"/>
        <end position="263"/>
    </location>
    <ligand>
        <name>ATP</name>
        <dbReference type="ChEBI" id="CHEBI:30616"/>
    </ligand>
</feature>
<feature type="binding site" evidence="4">
    <location>
        <position position="278"/>
    </location>
    <ligand>
        <name>ATP</name>
        <dbReference type="ChEBI" id="CHEBI:30616"/>
    </ligand>
</feature>
<feature type="site" description="Cleavage; by caspase-3 or caspase-3-like proteases" evidence="26 27">
    <location>
        <begin position="212"/>
        <end position="213"/>
    </location>
</feature>
<feature type="modified residue" description="N-acetylserine" evidence="34 35 36 37">
    <location>
        <position position="2"/>
    </location>
</feature>
<feature type="modified residue" description="Phosphoserine" evidence="30 34 35 38">
    <location>
        <position position="2"/>
    </location>
</feature>
<feature type="modified residue" description="Phosphoserine" evidence="38">
    <location>
        <position position="20"/>
    </location>
</feature>
<feature type="modified residue" description="Phosphoserine" evidence="38">
    <location>
        <position position="55"/>
    </location>
</feature>
<feature type="modified residue" description="Phosphoserine" evidence="31 38">
    <location>
        <position position="58"/>
    </location>
</feature>
<feature type="modified residue" description="Phosphothreonine" evidence="38">
    <location>
        <position position="60"/>
    </location>
</feature>
<feature type="modified residue" description="N6-acetyllysine" evidence="2">
    <location>
        <position position="62"/>
    </location>
</feature>
<feature type="modified residue" description="Phosphoserine" evidence="38">
    <location>
        <position position="64"/>
    </location>
</feature>
<feature type="modified residue" description="N6-acetyllysine" evidence="32">
    <location>
        <position position="128"/>
    </location>
</feature>
<feature type="modified residue" description="Phosphothreonine" evidence="38">
    <location>
        <position position="134"/>
    </location>
</feature>
<feature type="modified residue" description="Phosphotyrosine" evidence="39">
    <location>
        <position position="139"/>
    </location>
</feature>
<feature type="modified residue" description="Phosphoserine" evidence="23 31 33 34 35 38 39">
    <location>
        <position position="141"/>
    </location>
</feature>
<feature type="modified residue" description="Phosphothreonine" evidence="38">
    <location>
        <position position="143"/>
    </location>
</feature>
<feature type="modified residue" description="Phosphoserine" evidence="2">
    <location>
        <position position="152"/>
    </location>
</feature>
<feature type="modified residue" description="Phosphothreonine" evidence="38">
    <location>
        <position position="154"/>
    </location>
</feature>
<feature type="modified residue" description="Phosphothreonine" evidence="31 35 38">
    <location>
        <position position="169"/>
    </location>
</feature>
<feature type="modified residue" description="Phosphoserine" evidence="33 38">
    <location>
        <position position="197"/>
    </location>
</feature>
<feature type="modified residue" description="Phosphothreonine; by autocatalysis" evidence="29">
    <location>
        <position position="402"/>
    </location>
</feature>
<feature type="lipid moiety-binding region" description="N-myristoyl glycine; in form PAK-2p34" evidence="12">
    <location>
        <position position="213"/>
    </location>
</feature>
<feature type="sequence variant" id="VAR_087512" description="In KNO2; loss of protein serine/threonine kinase activity; dbSNP:rs2108773003." evidence="23">
    <original>E</original>
    <variation>K</variation>
    <location>
        <position position="435"/>
    </location>
</feature>
<feature type="mutagenesis site" description="Inhibits caspase-mediated cleavage." evidence="26">
    <original>D</original>
    <variation>N</variation>
    <location>
        <position position="212"/>
    </location>
</feature>
<feature type="mutagenesis site" description="Abolishes myristoylation of PAK-2p34 and membrane location." evidence="12">
    <original>G</original>
    <variation>A</variation>
    <location>
        <position position="213"/>
    </location>
</feature>
<feature type="mutagenesis site" description="Abolishes nuclear export." evidence="8">
    <original>IVSIG</original>
    <variation>REGRS</variation>
    <location>
        <begin position="239"/>
        <end position="243"/>
    </location>
</feature>
<feature type="mutagenesis site" description="Greatly inhibits nuclear localization." evidence="8">
    <original>KKK</original>
    <variation>MHE</variation>
    <location>
        <begin position="246"/>
        <end position="248"/>
    </location>
</feature>
<feature type="mutagenesis site" description="Abolishes kinase activity and autophosphorylation." evidence="27">
    <original>K</original>
    <variation>R</variation>
    <location>
        <position position="278"/>
    </location>
</feature>
<feature type="mutagenesis site" description="Abolishes kinase activity and greatly inhibits autophosphorylation of PAK-2p27 and PAK-2p34." evidence="27">
    <original>T</original>
    <variation>A</variation>
    <location>
        <position position="402"/>
    </location>
</feature>
<feature type="sequence conflict" description="In Ref. 3; AAA75468." evidence="28" ref="3">
    <original>A</original>
    <variation>T</variation>
    <location>
        <position position="90"/>
    </location>
</feature>
<feature type="sequence conflict" description="In Ref. 1; AAA65442." evidence="28" ref="1">
    <original>F</original>
    <variation>L</variation>
    <location>
        <position position="150"/>
    </location>
</feature>
<feature type="sequence conflict" description="In Ref. 1; AAA65442." evidence="28" ref="1">
    <original>T</original>
    <variation>P</variation>
    <location>
        <position position="225"/>
    </location>
</feature>
<feature type="sequence conflict" description="In Ref. 2; AAH69613." evidence="28" ref="2">
    <original>G</original>
    <variation>R</variation>
    <location>
        <position position="258"/>
    </location>
</feature>
<feature type="sequence conflict" description="In Ref. 3; AAA75468." evidence="28" ref="3">
    <original>G</original>
    <variation>R</variation>
    <location>
        <position position="329"/>
    </location>
</feature>
<feature type="sequence conflict" description="In Ref. 1; AAA65442." evidence="28" ref="1">
    <original>T</original>
    <variation>TA</variation>
    <location>
        <position position="338"/>
    </location>
</feature>
<feature type="helix" evidence="40">
    <location>
        <begin position="123"/>
        <end position="126"/>
    </location>
</feature>
<gene>
    <name type="primary">PAK2</name>
</gene>
<reference key="1">
    <citation type="submission" date="1995-04" db="EMBL/GenBank/DDBJ databases">
        <authorList>
            <person name="Sells M."/>
            <person name="Knause U.J."/>
            <person name="Bagrodia S."/>
            <person name="Ambrose D."/>
            <person name="Bokoch G.M."/>
            <person name="Chernoff J."/>
        </authorList>
    </citation>
    <scope>NUCLEOTIDE SEQUENCE [MRNA]</scope>
</reference>
<reference key="2">
    <citation type="journal article" date="2004" name="Genome Res.">
        <title>The status, quality, and expansion of the NIH full-length cDNA project: the Mammalian Gene Collection (MGC).</title>
        <authorList>
            <consortium name="The MGC Project Team"/>
        </authorList>
    </citation>
    <scope>NUCLEOTIDE SEQUENCE [LARGE SCALE MRNA]</scope>
</reference>
<reference key="3">
    <citation type="journal article" date="1995" name="EMBO J.">
        <title>A novel serine kinase activated by rac1/CDC42Hs-dependent autophosphorylation is related to PAK65 and STE20.</title>
        <authorList>
            <person name="Martin G.A."/>
            <person name="Bollag G."/>
            <person name="McCormick F."/>
            <person name="Abo A."/>
        </authorList>
    </citation>
    <scope>NUCLEOTIDE SEQUENCE [MRNA] OF 32-524</scope>
    <scope>PROTEIN SEQUENCE OF 401-417</scope>
    <scope>FUNCTION</scope>
    <scope>TISSUE SPECIFICITY</scope>
    <source>
        <tissue>Placenta</tissue>
    </source>
</reference>
<reference key="4">
    <citation type="journal article" date="1995" name="EMBO J.">
        <authorList>
            <person name="Martin G.A."/>
            <person name="Bollag G."/>
            <person name="McCormick F."/>
            <person name="Abo A."/>
        </authorList>
    </citation>
    <scope>ERRATUM OF PUBMED:7744004</scope>
</reference>
<reference key="5">
    <citation type="journal article" date="1995" name="J. Biol. Chem.">
        <title>Activation of an S6/H4 kinase (PAK 65) from human placenta by intramolecular and intermolecular autophosphorylation.</title>
        <authorList>
            <person name="Benner G.E."/>
            <person name="Dennis P.B."/>
            <person name="Masaracchia R.A."/>
        </authorList>
    </citation>
    <scope>AUTOPHOSPHORYLATION</scope>
</reference>
<reference key="6">
    <citation type="journal article" date="1997" name="Science">
        <title>Membrane and morphological changes in apoptotic cells regulated by caspase-mediated activation of PAK2.</title>
        <authorList>
            <person name="Rudel T."/>
            <person name="Bokoch G.M."/>
        </authorList>
    </citation>
    <scope>PROTEOLYTIC CLEAVAGE AT ASP-212 BY CASPASE-3</scope>
    <scope>FUNCTION</scope>
    <scope>MUTAGENESIS OF ASP-212</scope>
</reference>
<reference key="7">
    <citation type="journal article" date="1998" name="J. Biol. Chem.">
        <title>Cleavage and activation of p21-activated protein kinase gamma-PAK by CPP32 (caspase 3). Effects of autophosphorylation on activity.</title>
        <authorList>
            <person name="Walter B.N."/>
            <person name="Huang Z."/>
            <person name="Jakobi R."/>
            <person name="Tuazon P.T."/>
            <person name="Alnemri E.S."/>
            <person name="Litwack G."/>
            <person name="Traugh J.A."/>
        </authorList>
    </citation>
    <scope>PROTEOLYTIC CLEAVAGE AT ASP-212 BY CASPASE-3</scope>
    <scope>AUTOPHOSPHORYLATION</scope>
    <scope>PHOSPHORYLATION AT THR-402</scope>
    <scope>MUTAGENESIS OF LYS-278 AND THR-402</scope>
</reference>
<reference key="8">
    <citation type="journal article" date="2000" name="J. Virol.">
        <title>Lentivirus Nef specifically activates Pak2.</title>
        <authorList>
            <person name="Arora V.K."/>
            <person name="Molina R.P."/>
            <person name="Foster J.L."/>
            <person name="Blakemore J.L."/>
            <person name="Chernoff J."/>
            <person name="Fredericksen B.L."/>
            <person name="Garcia J.V."/>
        </authorList>
    </citation>
    <scope>INTERACTION WITH HIV-1 NEF (MICROBIAL INFECTION)</scope>
</reference>
<reference key="9">
    <citation type="journal article" date="2003" name="J. Biol. Chem.">
        <title>Caspase-activated PAK-2 is regulated by subcellular targeting and proteasomal degradation.</title>
        <authorList>
            <person name="Jakobi R."/>
            <person name="McCarthy C.C."/>
            <person name="Koeppel M.A."/>
            <person name="Stringer D.K."/>
        </authorList>
    </citation>
    <scope>FUNCTION (PAK-2P34)</scope>
    <scope>UBIQUITINATION</scope>
    <scope>SUBCELLULAR LOCATION</scope>
    <scope>MUTAGENESIS OF 239-ILE--GLY-243 AND 246-LYS--LYS-248</scope>
</reference>
<reference key="10">
    <citation type="journal article" date="2004" name="J. Biol. Chem.">
        <title>Phosphorylation of Mnk1 by caspase-activated Pak2/gamma-PAK inhibits phosphorylation and interaction of eIF4G with Mnk.</title>
        <authorList>
            <person name="Orton K.C."/>
            <person name="Ling J."/>
            <person name="Waskiewicz A.J."/>
            <person name="Cooper J.A."/>
            <person name="Merrick W.C."/>
            <person name="Korneeva N.L."/>
            <person name="Rhoads R.E."/>
            <person name="Sonenberg N."/>
            <person name="Traugh J.A."/>
        </authorList>
    </citation>
    <scope>FUNCTION IN PHOSPHORYLATION OF MKNK1</scope>
    <scope>CATALYTIC ACTIVITY</scope>
</reference>
<reference key="11">
    <citation type="journal article" date="2004" name="J. Biol. Chem.">
        <title>Identification and characterization of PS-GAP as a novel regulator of caspase-activated PAK-2.</title>
        <authorList>
            <person name="Koeppel M.A."/>
            <person name="McCarthy C.C."/>
            <person name="Moertl E."/>
            <person name="Jakobi R."/>
        </authorList>
    </citation>
    <scope>INTERACTION WITH ARHGAP10</scope>
    <scope>SUBCELLULAR LOCATION</scope>
</reference>
<reference key="12">
    <citation type="journal article" date="2006" name="Cell">
        <title>Global, in vivo, and site-specific phosphorylation dynamics in signaling networks.</title>
        <authorList>
            <person name="Olsen J.V."/>
            <person name="Blagoev B."/>
            <person name="Gnad F."/>
            <person name="Macek B."/>
            <person name="Kumar C."/>
            <person name="Mortensen P."/>
            <person name="Mann M."/>
        </authorList>
    </citation>
    <scope>PHOSPHORYLATION [LARGE SCALE ANALYSIS] AT SER-2</scope>
    <scope>IDENTIFICATION BY MASS SPECTROMETRY [LARGE SCALE ANALYSIS]</scope>
    <source>
        <tissue>Cervix carcinoma</tissue>
    </source>
</reference>
<reference key="13">
    <citation type="journal article" date="2006" name="EMBO Rep.">
        <title>Identification of preferred protein interactions by phage-display of the human Src homology-3 proteome.</title>
        <authorList>
            <person name="Kaerkkaeinen S."/>
            <person name="Hiipakka M."/>
            <person name="Wang J.-H."/>
            <person name="Kleino I."/>
            <person name="Vaehae-Jaakkola M."/>
            <person name="Renkema G.H."/>
            <person name="Liss M."/>
            <person name="Wagner R."/>
            <person name="Saksela K."/>
        </authorList>
    </citation>
    <scope>INTERACTION WITH SH3MD4</scope>
</reference>
<reference key="14">
    <citation type="journal article" date="2006" name="Proc. Natl. Acad. Sci. U.S.A.">
        <title>Posttranslational myristoylation of caspase-activated p21-activated protein kinase 2 (PAK2) potentiates late apoptotic events.</title>
        <authorList>
            <person name="Vilas G.L."/>
            <person name="Corvi M.M."/>
            <person name="Plummer G.J."/>
            <person name="Seime A.M."/>
            <person name="Lambkin G.R."/>
            <person name="Berthiaume L.G."/>
        </authorList>
    </citation>
    <scope>FUNCTION (PAK-2P34)</scope>
    <scope>MYRISTOYLATION AT GLY-213 (PAK-2P34)</scope>
    <scope>SUBCELLULAR LOCATION</scope>
    <scope>MUTAGENESIS OF GLY-213</scope>
</reference>
<reference key="15">
    <citation type="journal article" date="2008" name="Hum. Mol. Genet.">
        <title>Scrib regulates PAK activity during the cell migration process.</title>
        <authorList>
            <person name="Nola S."/>
            <person name="Sebbagh M."/>
            <person name="Marchetto S."/>
            <person name="Osmani N."/>
            <person name="Nourry C."/>
            <person name="Audebert S."/>
            <person name="Navarro C."/>
            <person name="Rachel R."/>
            <person name="Montcouquiol M."/>
            <person name="Sans N."/>
            <person name="Etienne-Manneville S."/>
            <person name="Borg J.-P."/>
            <person name="Santoni M.-J."/>
        </authorList>
    </citation>
    <scope>INTERACTION WITH SCRIB</scope>
</reference>
<reference key="16">
    <citation type="journal article" date="2008" name="J. Proteome Res.">
        <title>Phosphoproteome of resting human platelets.</title>
        <authorList>
            <person name="Zahedi R.P."/>
            <person name="Lewandrowski U."/>
            <person name="Wiesner J."/>
            <person name="Wortelkamp S."/>
            <person name="Moebius J."/>
            <person name="Schuetz C."/>
            <person name="Walter U."/>
            <person name="Gambaryan S."/>
            <person name="Sickmann A."/>
        </authorList>
    </citation>
    <scope>IDENTIFICATION BY MASS SPECTROMETRY [LARGE SCALE ANALYSIS]</scope>
    <source>
        <tissue>Platelet</tissue>
    </source>
</reference>
<reference key="17">
    <citation type="journal article" date="2008" name="Proc. Natl. Acad. Sci. U.S.A.">
        <title>A quantitative atlas of mitotic phosphorylation.</title>
        <authorList>
            <person name="Dephoure N."/>
            <person name="Zhou C."/>
            <person name="Villen J."/>
            <person name="Beausoleil S.A."/>
            <person name="Bakalarski C.E."/>
            <person name="Elledge S.J."/>
            <person name="Gygi S.P."/>
        </authorList>
    </citation>
    <scope>PHOSPHORYLATION [LARGE SCALE ANALYSIS] AT SER-58; SER-141 AND THR-169</scope>
    <scope>IDENTIFICATION BY MASS SPECTROMETRY [LARGE SCALE ANALYSIS]</scope>
    <source>
        <tissue>Cervix carcinoma</tissue>
    </source>
</reference>
<reference key="18">
    <citation type="journal article" date="2009" name="Mol. Cell. Biol.">
        <title>Dual role of Cdc42 in spindle orientation control of adherent cells.</title>
        <authorList>
            <person name="Mitsushima M."/>
            <person name="Toyoshima F."/>
            <person name="Nishida E."/>
        </authorList>
    </citation>
    <scope>FUNCTION</scope>
    <scope>INTERACTION WITH ARHGEF7 AND GIT1</scope>
</reference>
<reference key="19">
    <citation type="journal article" date="2009" name="Sci. Signal.">
        <title>Quantitative phosphoproteomic analysis of T cell receptor signaling reveals system-wide modulation of protein-protein interactions.</title>
        <authorList>
            <person name="Mayya V."/>
            <person name="Lundgren D.H."/>
            <person name="Hwang S.-I."/>
            <person name="Rezaul K."/>
            <person name="Wu L."/>
            <person name="Eng J.K."/>
            <person name="Rodionov V."/>
            <person name="Han D.K."/>
        </authorList>
    </citation>
    <scope>PHOSPHORYLATION [LARGE SCALE ANALYSIS] AT SER-141 AND SER-197</scope>
    <scope>IDENTIFICATION BY MASS SPECTROMETRY [LARGE SCALE ANALYSIS]</scope>
    <source>
        <tissue>Leukemic T-cell</tissue>
    </source>
</reference>
<reference key="20">
    <citation type="journal article" date="2009" name="Science">
        <title>Lysine acetylation targets protein complexes and co-regulates major cellular functions.</title>
        <authorList>
            <person name="Choudhary C."/>
            <person name="Kumar C."/>
            <person name="Gnad F."/>
            <person name="Nielsen M.L."/>
            <person name="Rehman M."/>
            <person name="Walther T.C."/>
            <person name="Olsen J.V."/>
            <person name="Mann M."/>
        </authorList>
    </citation>
    <scope>ACETYLATION [LARGE SCALE ANALYSIS] AT LYS-128</scope>
    <scope>IDENTIFICATION BY MASS SPECTROMETRY [LARGE SCALE ANALYSIS]</scope>
</reference>
<reference key="21">
    <citation type="journal article" date="2010" name="FEBS Lett.">
        <title>POSH2 is a RING finger E3 ligase with Rac1 binding activity through a partial CRIB domain.</title>
        <authorList>
            <person name="Kaerkkaeinen S."/>
            <person name="van der Linden M."/>
            <person name="Renkema G.H."/>
        </authorList>
    </citation>
    <scope>INTERACTION WITH RAC1</scope>
</reference>
<reference key="22">
    <citation type="journal article" date="2010" name="Mol. Biol. Cell">
        <title>Identification of MYO18A as a novel interacting partner of the PAK2/betaPIX/GIT1 complex and its potential function in modulating epithelial cell migration.</title>
        <authorList>
            <person name="Hsu R.M."/>
            <person name="Tsai M.H."/>
            <person name="Hsieh Y.J."/>
            <person name="Lyu P.C."/>
            <person name="Yu J.S."/>
        </authorList>
    </citation>
    <scope>FUNCTION</scope>
    <scope>SUBCELLULAR LOCATION</scope>
</reference>
<reference key="23">
    <citation type="journal article" date="2010" name="Sci. Signal.">
        <title>Quantitative phosphoproteomics reveals widespread full phosphorylation site occupancy during mitosis.</title>
        <authorList>
            <person name="Olsen J.V."/>
            <person name="Vermeulen M."/>
            <person name="Santamaria A."/>
            <person name="Kumar C."/>
            <person name="Miller M.L."/>
            <person name="Jensen L.J."/>
            <person name="Gnad F."/>
            <person name="Cox J."/>
            <person name="Jensen T.S."/>
            <person name="Nigg E.A."/>
            <person name="Brunak S."/>
            <person name="Mann M."/>
        </authorList>
    </citation>
    <scope>ACETYLATION [LARGE SCALE ANALYSIS] AT SER-2</scope>
    <scope>PHOSPHORYLATION [LARGE SCALE ANALYSIS] AT SER-2 AND SER-141</scope>
    <scope>CLEAVAGE OF INITIATOR METHIONINE [LARGE SCALE ANALYSIS]</scope>
    <scope>IDENTIFICATION BY MASS SPECTROMETRY [LARGE SCALE ANALYSIS]</scope>
    <source>
        <tissue>Cervix carcinoma</tissue>
    </source>
</reference>
<reference key="24">
    <citation type="journal article" date="2011" name="BMC Syst. Biol.">
        <title>Initial characterization of the human central proteome.</title>
        <authorList>
            <person name="Burkard T.R."/>
            <person name="Planyavsky M."/>
            <person name="Kaupe I."/>
            <person name="Breitwieser F.P."/>
            <person name="Buerckstuemmer T."/>
            <person name="Bennett K.L."/>
            <person name="Superti-Furga G."/>
            <person name="Colinge J."/>
        </authorList>
    </citation>
    <scope>IDENTIFICATION BY MASS SPECTROMETRY [LARGE SCALE ANALYSIS]</scope>
</reference>
<reference key="25">
    <citation type="journal article" date="2011" name="J. Biol. Chem.">
        <title>Mechanistic studies of the autoactivation of PAK2: a two-step model of cis initiation followed by trans amplification.</title>
        <authorList>
            <person name="Wang J."/>
            <person name="Wu J.W."/>
            <person name="Wang Z.X."/>
        </authorList>
    </citation>
    <scope>AUTOPHOSPHORYLATION</scope>
</reference>
<reference key="26">
    <citation type="journal article" date="2011" name="J. Biol. Chem.">
        <title>Identification of the atypical MAPK Erk3 as a novel substrate for p21-activated kinase (Pak) activity.</title>
        <authorList>
            <person name="De la Mota-Peynado A."/>
            <person name="Chernoff J."/>
            <person name="Beeser A."/>
        </authorList>
    </citation>
    <scope>FUNCTION IN PHOSPHORYLATION OF MAPK4 AND MAPK6</scope>
    <scope>CATALYTIC ACTIVITY</scope>
</reference>
<reference key="27">
    <citation type="journal article" date="2011" name="J. Biol. Chem.">
        <title>Phosphorylation of caspase-7 by p21-activated protein kinase (PAK) 2 inhibits chemotherapeutic drug-induced apoptosis of breast cancer cell lines.</title>
        <authorList>
            <person name="Li X."/>
            <person name="Wen W."/>
            <person name="Liu K."/>
            <person name="Zhu F."/>
            <person name="Malakhova M."/>
            <person name="Peng C."/>
            <person name="Li T."/>
            <person name="Kim H.G."/>
            <person name="Ma W."/>
            <person name="Cho Y.Y."/>
            <person name="Bode A.M."/>
            <person name="Dong Z."/>
            <person name="Dong Z."/>
        </authorList>
    </citation>
    <scope>FUNCTION IN PHOSPHORYLATION OF CASP7</scope>
    <scope>CATALYTIC ACTIVITY</scope>
    <scope>SUBCELLULAR LOCATION</scope>
</reference>
<reference key="28">
    <citation type="journal article" date="2011" name="Carcinogenesis">
        <title>P21-activated protein kinase (PAK2)-mediated c-Jun phosphorylation at 5 threonine sites promotes cell transformation.</title>
        <authorList>
            <person name="Li T."/>
            <person name="Zhang J."/>
            <person name="Zhu F."/>
            <person name="Wen W."/>
            <person name="Zykova T."/>
            <person name="Li X."/>
            <person name="Liu K."/>
            <person name="Peng C."/>
            <person name="Ma W."/>
            <person name="Shi G."/>
            <person name="Dong Z."/>
            <person name="Bode A.M."/>
            <person name="Dong Z."/>
        </authorList>
    </citation>
    <scope>FUNCTION IN PHOSPHORYLATION OF JUN</scope>
    <scope>CATALYTIC ACTIVITY</scope>
</reference>
<reference key="29">
    <citation type="journal article" date="2011" name="Genes Dev.">
        <title>Phosphorylation of H4 Ser 47 promotes HIRA-mediated nucleosome assembly.</title>
        <authorList>
            <person name="Kang B."/>
            <person name="Pu M."/>
            <person name="Hu G."/>
            <person name="Wen W."/>
            <person name="Dong Z."/>
            <person name="Zhao K."/>
            <person name="Stillman B."/>
            <person name="Zhang Z."/>
        </authorList>
    </citation>
    <scope>FUNCTION IN PHOSPHORYLATION OF HISTONE H4</scope>
    <scope>CATALYTIC ACTIVITY</scope>
</reference>
<reference key="30">
    <citation type="journal article" date="2011" name="Sci. Signal.">
        <title>System-wide temporal characterization of the proteome and phosphoproteome of human embryonic stem cell differentiation.</title>
        <authorList>
            <person name="Rigbolt K.T."/>
            <person name="Prokhorova T.A."/>
            <person name="Akimov V."/>
            <person name="Henningsen J."/>
            <person name="Johansen P.T."/>
            <person name="Kratchmarova I."/>
            <person name="Kassem M."/>
            <person name="Mann M."/>
            <person name="Olsen J.V."/>
            <person name="Blagoev B."/>
        </authorList>
    </citation>
    <scope>ACETYLATION [LARGE SCALE ANALYSIS] AT SER-2</scope>
    <scope>PHOSPHORYLATION [LARGE SCALE ANALYSIS] AT SER-2; SER-141 AND THR-169</scope>
    <scope>CLEAVAGE OF INITIATOR METHIONINE [LARGE SCALE ANALYSIS]</scope>
    <scope>IDENTIFICATION BY MASS SPECTROMETRY [LARGE SCALE ANALYSIS]</scope>
</reference>
<reference key="31">
    <citation type="journal article" date="2012" name="Mol. Cell. Proteomics">
        <title>Comparative large-scale characterisation of plant vs. mammal proteins reveals similar and idiosyncratic N-alpha acetylation features.</title>
        <authorList>
            <person name="Bienvenut W.V."/>
            <person name="Sumpton D."/>
            <person name="Martinez A."/>
            <person name="Lilla S."/>
            <person name="Espagne C."/>
            <person name="Meinnel T."/>
            <person name="Giglione C."/>
        </authorList>
    </citation>
    <scope>ACETYLATION [LARGE SCALE ANALYSIS] AT SER-2</scope>
    <scope>CLEAVAGE OF INITIATOR METHIONINE [LARGE SCALE ANALYSIS]</scope>
    <scope>IDENTIFICATION BY MASS SPECTROMETRY [LARGE SCALE ANALYSIS]</scope>
</reference>
<reference key="32">
    <citation type="journal article" date="2012" name="Proc. Natl. Acad. Sci. U.S.A.">
        <title>N-terminal acetylome analyses and functional insights of the N-terminal acetyltransferase NatB.</title>
        <authorList>
            <person name="Van Damme P."/>
            <person name="Lasa M."/>
            <person name="Polevoda B."/>
            <person name="Gazquez C."/>
            <person name="Elosegui-Artola A."/>
            <person name="Kim D.S."/>
            <person name="De Juan-Pardo E."/>
            <person name="Demeyer K."/>
            <person name="Hole K."/>
            <person name="Larrea E."/>
            <person name="Timmerman E."/>
            <person name="Prieto J."/>
            <person name="Arnesen T."/>
            <person name="Sherman F."/>
            <person name="Gevaert K."/>
            <person name="Aldabe R."/>
        </authorList>
    </citation>
    <scope>ACETYLATION [LARGE SCALE ANALYSIS] AT SER-2</scope>
    <scope>CLEAVAGE OF INITIATOR METHIONINE [LARGE SCALE ANALYSIS]</scope>
    <scope>IDENTIFICATION BY MASS SPECTROMETRY [LARGE SCALE ANALYSIS]</scope>
</reference>
<reference key="33">
    <citation type="journal article" date="2013" name="J. Proteome Res.">
        <title>Toward a comprehensive characterization of a human cancer cell phosphoproteome.</title>
        <authorList>
            <person name="Zhou H."/>
            <person name="Di Palma S."/>
            <person name="Preisinger C."/>
            <person name="Peng M."/>
            <person name="Polat A.N."/>
            <person name="Heck A.J."/>
            <person name="Mohammed S."/>
        </authorList>
    </citation>
    <scope>PHOSPHORYLATION [LARGE SCALE ANALYSIS] AT SER-2; SER-20; SER-55; SER-58; THR-60; SER-64; THR-134; SER-141; THR-143; THR-154; THR-169 AND SER-197</scope>
    <scope>IDENTIFICATION BY MASS SPECTROMETRY [LARGE SCALE ANALYSIS]</scope>
    <source>
        <tissue>Cervix carcinoma</tissue>
        <tissue>Erythroleukemia</tissue>
    </source>
</reference>
<reference key="34">
    <citation type="journal article" date="2014" name="J. Proteomics">
        <title>An enzyme assisted RP-RPLC approach for in-depth analysis of human liver phosphoproteome.</title>
        <authorList>
            <person name="Bian Y."/>
            <person name="Song C."/>
            <person name="Cheng K."/>
            <person name="Dong M."/>
            <person name="Wang F."/>
            <person name="Huang J."/>
            <person name="Sun D."/>
            <person name="Wang L."/>
            <person name="Ye M."/>
            <person name="Zou H."/>
        </authorList>
    </citation>
    <scope>PHOSPHORYLATION [LARGE SCALE ANALYSIS] AT TYR-139 AND SER-141</scope>
    <scope>IDENTIFICATION BY MASS SPECTROMETRY [LARGE SCALE ANALYSIS]</scope>
    <source>
        <tissue>Liver</tissue>
    </source>
</reference>
<reference key="35">
    <citation type="journal article" date="2017" name="Structure">
        <title>Dual site phosphorylation of caspase-7 by PAK2 blocks apoptotic activity by two distinct mechanisms.</title>
        <authorList>
            <person name="Eron S.J."/>
            <person name="Raghupathi K."/>
            <person name="Hardy J.A."/>
        </authorList>
    </citation>
    <scope>FUNCTION IN PHOSPHORYLATION OF CASP7</scope>
    <scope>CATALYTIC ACTIVITY</scope>
</reference>
<reference key="36">
    <citation type="journal article" date="2011" name="Nature">
        <title>The assembly of a GTPase-kinase signalling complex by a bacterial catalytic scaffold.</title>
        <authorList>
            <person name="Selyunin A.S."/>
            <person name="Sutton S.E."/>
            <person name="Weigele B.A."/>
            <person name="Reddick L.E."/>
            <person name="Orchard R.C."/>
            <person name="Bresson S.M."/>
            <person name="Tomchick D.R."/>
            <person name="Alto N.M."/>
        </authorList>
    </citation>
    <scope>X-RAY CRYSTALLOGRAPHY (2.86 ANGSTROMS) OF 121-136</scope>
</reference>
<reference key="37">
    <citation type="journal article" date="2021" name="Hum. Mol. Genet.">
        <title>Dominant monoallelic variant in the PAK2 gene causes Knobloch syndrome type 2.</title>
        <authorList>
            <person name="Antonarakis S.E."/>
            <person name="Holoubek A."/>
            <person name="Rapti M."/>
            <person name="Rademaker J."/>
            <person name="Meylan J."/>
            <person name="Iwaszkiewicz J."/>
            <person name="Zoete V."/>
            <person name="Wilson C."/>
            <person name="Taylor J."/>
            <person name="Ansar M."/>
            <person name="Borel C."/>
            <person name="Menzel O."/>
            <person name="Kuzelova K."/>
            <person name="Santoni F.A."/>
        </authorList>
    </citation>
    <scope>INVOLVEMENT IN KNO2</scope>
    <scope>VARIANT KNO2 LYS-435</scope>
    <scope>CHARACTERIZATION OF VARIANT KNO2 LYS-435</scope>
    <scope>FUNCTION</scope>
    <scope>CATALYTIC ACTIVITY</scope>
</reference>
<accession>Q13177</accession>
<accession>Q13154</accession>
<accession>Q6ISC3</accession>
<keyword id="KW-0002">3D-structure</keyword>
<keyword id="KW-0007">Acetylation</keyword>
<keyword id="KW-0021">Allosteric enzyme</keyword>
<keyword id="KW-0053">Apoptosis</keyword>
<keyword id="KW-0067">ATP-binding</keyword>
<keyword id="KW-0963">Cytoplasm</keyword>
<keyword id="KW-0903">Direct protein sequencing</keyword>
<keyword id="KW-0225">Disease variant</keyword>
<keyword id="KW-0341">Growth regulation</keyword>
<keyword id="KW-0945">Host-virus interaction</keyword>
<keyword id="KW-0418">Kinase</keyword>
<keyword id="KW-0449">Lipoprotein</keyword>
<keyword id="KW-0472">Membrane</keyword>
<keyword id="KW-0519">Myristate</keyword>
<keyword id="KW-0547">Nucleotide-binding</keyword>
<keyword id="KW-0539">Nucleus</keyword>
<keyword id="KW-0597">Phosphoprotein</keyword>
<keyword id="KW-1267">Proteomics identification</keyword>
<keyword id="KW-1185">Reference proteome</keyword>
<keyword id="KW-0723">Serine/threonine-protein kinase</keyword>
<keyword id="KW-0808">Transferase</keyword>
<keyword id="KW-0832">Ubl conjugation</keyword>